<accession>Q9UW81</accession>
<accession>Q7RVS2</accession>
<feature type="chain" id="PRO_0000196283" description="Opsin-1">
    <location>
        <begin position="1"/>
        <end position="304"/>
    </location>
</feature>
<feature type="topological domain" description="Extracellular" evidence="2">
    <location>
        <begin position="1"/>
        <end position="45"/>
    </location>
</feature>
<feature type="transmembrane region" description="Helical; Name=Helix A" evidence="2">
    <location>
        <begin position="46"/>
        <end position="66"/>
    </location>
</feature>
<feature type="transmembrane region" description="Helical; Name=Helix B" evidence="2">
    <location>
        <begin position="74"/>
        <end position="94"/>
    </location>
</feature>
<feature type="transmembrane region" description="Helical; Name=Helix C" evidence="2">
    <location>
        <begin position="129"/>
        <end position="149"/>
    </location>
</feature>
<feature type="transmembrane region" description="Helical; Name=Helix D" evidence="2">
    <location>
        <begin position="154"/>
        <end position="174"/>
    </location>
</feature>
<feature type="transmembrane region" description="Helical; Name=Helix E" evidence="2">
    <location>
        <begin position="183"/>
        <end position="203"/>
    </location>
</feature>
<feature type="transmembrane region" description="Helical; Name=Helix F" evidence="2">
    <location>
        <begin position="219"/>
        <end position="239"/>
    </location>
</feature>
<feature type="transmembrane region" description="Helical; Name=Helix G" evidence="2">
    <location>
        <begin position="252"/>
        <end position="272"/>
    </location>
</feature>
<feature type="topological domain" description="Cytoplasmic" evidence="2">
    <location>
        <begin position="273"/>
        <end position="304"/>
    </location>
</feature>
<feature type="modified residue" description="N6-(retinylidene)lysine" evidence="1">
    <location>
        <position position="263"/>
    </location>
</feature>
<feature type="mutagenesis site" description="Changes in photocycle indicate that this residue is involved in reprotonation of the Schiff-base." evidence="5">
    <original>D</original>
    <variation>E</variation>
    <location>
        <position position="131"/>
    </location>
</feature>
<feature type="mutagenesis site" description="Little change in photocycle, indicating that this residue is not involved in reprotonation of the Schiff-base." evidence="5">
    <original>E</original>
    <variation>Q</variation>
    <location>
        <position position="142"/>
    </location>
</feature>
<reference evidence="8" key="1">
    <citation type="journal article" date="1999" name="Proc. Natl. Acad. Sci. U.S.A.">
        <title>The nop-1 gene of Neurospora crassa encodes a seven transmembrane helix retinal-binding protein homologous to archaeal rhodopsins.</title>
        <authorList>
            <person name="Bieszke J.A."/>
            <person name="Braun E.L."/>
            <person name="Bean L.E."/>
            <person name="Kang S."/>
            <person name="Natvig D.O."/>
            <person name="Borkovich K.A."/>
        </authorList>
    </citation>
    <scope>NUCLEOTIDE SEQUENCE [GENOMIC DNA]</scope>
    <scope>DEVELOPMENTAL STAGE</scope>
    <source>
        <strain>ATCC 24698 / 74-OR23-1A / CBS 708.71 / DSM 1257 / FGSC 987</strain>
    </source>
</reference>
<reference key="2">
    <citation type="journal article" date="2003" name="Nature">
        <title>The genome sequence of the filamentous fungus Neurospora crassa.</title>
        <authorList>
            <person name="Galagan J.E."/>
            <person name="Calvo S.E."/>
            <person name="Borkovich K.A."/>
            <person name="Selker E.U."/>
            <person name="Read N.D."/>
            <person name="Jaffe D.B."/>
            <person name="FitzHugh W."/>
            <person name="Ma L.-J."/>
            <person name="Smirnov S."/>
            <person name="Purcell S."/>
            <person name="Rehman B."/>
            <person name="Elkins T."/>
            <person name="Engels R."/>
            <person name="Wang S."/>
            <person name="Nielsen C.B."/>
            <person name="Butler J."/>
            <person name="Endrizzi M."/>
            <person name="Qui D."/>
            <person name="Ianakiev P."/>
            <person name="Bell-Pedersen D."/>
            <person name="Nelson M.A."/>
            <person name="Werner-Washburne M."/>
            <person name="Selitrennikoff C.P."/>
            <person name="Kinsey J.A."/>
            <person name="Braun E.L."/>
            <person name="Zelter A."/>
            <person name="Schulte U."/>
            <person name="Kothe G.O."/>
            <person name="Jedd G."/>
            <person name="Mewes H.-W."/>
            <person name="Staben C."/>
            <person name="Marcotte E."/>
            <person name="Greenberg D."/>
            <person name="Roy A."/>
            <person name="Foley K."/>
            <person name="Naylor J."/>
            <person name="Stange-Thomann N."/>
            <person name="Barrett R."/>
            <person name="Gnerre S."/>
            <person name="Kamal M."/>
            <person name="Kamvysselis M."/>
            <person name="Mauceli E.W."/>
            <person name="Bielke C."/>
            <person name="Rudd S."/>
            <person name="Frishman D."/>
            <person name="Krystofova S."/>
            <person name="Rasmussen C."/>
            <person name="Metzenberg R.L."/>
            <person name="Perkins D.D."/>
            <person name="Kroken S."/>
            <person name="Cogoni C."/>
            <person name="Macino G."/>
            <person name="Catcheside D.E.A."/>
            <person name="Li W."/>
            <person name="Pratt R.J."/>
            <person name="Osmani S.A."/>
            <person name="DeSouza C.P.C."/>
            <person name="Glass N.L."/>
            <person name="Orbach M.J."/>
            <person name="Berglund J.A."/>
            <person name="Voelker R."/>
            <person name="Yarden O."/>
            <person name="Plamann M."/>
            <person name="Seiler S."/>
            <person name="Dunlap J.C."/>
            <person name="Radford A."/>
            <person name="Aramayo R."/>
            <person name="Natvig D.O."/>
            <person name="Alex L.A."/>
            <person name="Mannhaupt G."/>
            <person name="Ebbole D.J."/>
            <person name="Freitag M."/>
            <person name="Paulsen I."/>
            <person name="Sachs M.S."/>
            <person name="Lander E.S."/>
            <person name="Nusbaum C."/>
            <person name="Birren B.W."/>
        </authorList>
    </citation>
    <scope>NUCLEOTIDE SEQUENCE [LARGE SCALE GENOMIC DNA]</scope>
    <source>
        <strain>ATCC 24698 / 74-OR23-1A / CBS 708.71 / DSM 1257 / FGSC 987</strain>
    </source>
</reference>
<reference evidence="8" key="3">
    <citation type="journal article" date="1999" name="Biochemistry">
        <title>A eukaryotic protein, NOP-1, binds retinal to form an archaeal rhodopsin-like photochemically reactive pigment.</title>
        <authorList>
            <person name="Bieszke J.A."/>
            <person name="Spudich E.N."/>
            <person name="Scott K.L."/>
            <person name="Borkovich K.A."/>
            <person name="Spudich J.L."/>
        </authorList>
    </citation>
    <scope>RETINAL-BINDING</scope>
</reference>
<reference evidence="8" key="4">
    <citation type="journal article" date="2001" name="J. Biol. Chem.">
        <title>Photochemical reaction cycle and proton transfers in Neurospora rhodopsin.</title>
        <authorList>
            <person name="Brown L.S."/>
            <person name="Dioumaev A.K."/>
            <person name="Lanyi J.K."/>
            <person name="Spudich E.N."/>
            <person name="Spudich J.L."/>
        </authorList>
    </citation>
    <scope>MUTAGENESIS OF ASP-131 AND GLU-142</scope>
    <scope>FOURIER-TRANSFORM INFRARED SPECTROSCOPY</scope>
</reference>
<reference evidence="8" key="5">
    <citation type="journal article" date="2002" name="Photochem. Photobiol.">
        <title>A Fourier transform infrared study of Neurospora rhodopsin: similarities with archaeal rhodopsins.</title>
        <authorList>
            <person name="Bergo V."/>
            <person name="Spudich E.N."/>
            <person name="Spudich J.L."/>
            <person name="Rothschild K.J."/>
        </authorList>
    </citation>
    <scope>FOURIER-TRANSFORM INFRARED SPECTROSCOPY OF WILD-TYPE AND MUTANT GLU-131</scope>
</reference>
<keyword id="KW-0157">Chromophore</keyword>
<keyword id="KW-0472">Membrane</keyword>
<keyword id="KW-0600">Photoreceptor protein</keyword>
<keyword id="KW-0675">Receptor</keyword>
<keyword id="KW-1185">Reference proteome</keyword>
<keyword id="KW-0681">Retinal protein</keyword>
<keyword id="KW-0704">Schiff base</keyword>
<keyword id="KW-0716">Sensory transduction</keyword>
<keyword id="KW-0812">Transmembrane</keyword>
<keyword id="KW-1133">Transmembrane helix</keyword>
<evidence type="ECO:0000250" key="1"/>
<evidence type="ECO:0000255" key="2"/>
<evidence type="ECO:0000269" key="3">
    <source>
    </source>
</evidence>
<evidence type="ECO:0000269" key="4">
    <source>
    </source>
</evidence>
<evidence type="ECO:0000269" key="5">
    <source>
    </source>
</evidence>
<evidence type="ECO:0000303" key="6">
    <source>
    </source>
</evidence>
<evidence type="ECO:0000303" key="7">
    <source>
    </source>
</evidence>
<evidence type="ECO:0000305" key="8"/>
<protein>
    <recommendedName>
        <fullName>Opsin-1</fullName>
    </recommendedName>
    <alternativeName>
        <fullName>NR</fullName>
    </alternativeName>
</protein>
<name>NOP1_NEUCR</name>
<organism>
    <name type="scientific">Neurospora crassa (strain ATCC 24698 / 74-OR23-1A / CBS 708.71 / DSM 1257 / FGSC 987)</name>
    <dbReference type="NCBI Taxonomy" id="367110"/>
    <lineage>
        <taxon>Eukaryota</taxon>
        <taxon>Fungi</taxon>
        <taxon>Dikarya</taxon>
        <taxon>Ascomycota</taxon>
        <taxon>Pezizomycotina</taxon>
        <taxon>Sordariomycetes</taxon>
        <taxon>Sordariomycetidae</taxon>
        <taxon>Sordariales</taxon>
        <taxon>Sordariaceae</taxon>
        <taxon>Neurospora</taxon>
    </lineage>
</organism>
<dbReference type="EMBL" id="AF135863">
    <property type="protein sequence ID" value="AAD45253.1"/>
    <property type="molecule type" value="Genomic_DNA"/>
</dbReference>
<dbReference type="EMBL" id="CM002242">
    <property type="protein sequence ID" value="EAA30185.1"/>
    <property type="molecule type" value="Genomic_DNA"/>
</dbReference>
<dbReference type="RefSeq" id="XP_959421.1">
    <property type="nucleotide sequence ID" value="XM_954328.3"/>
</dbReference>
<dbReference type="SMR" id="Q9UW81"/>
<dbReference type="STRING" id="367110.Q9UW81"/>
<dbReference type="TCDB" id="3.E.1.4.2">
    <property type="family name" value="the ion-translocating microbial rhodopsin (mr) family"/>
</dbReference>
<dbReference type="PaxDb" id="5141-EFNCRP00000009817"/>
<dbReference type="EnsemblFungi" id="EAA30185">
    <property type="protein sequence ID" value="EAA30185"/>
    <property type="gene ID" value="NCU10055"/>
</dbReference>
<dbReference type="GeneID" id="3875568"/>
<dbReference type="KEGG" id="ncr:NCU10055"/>
<dbReference type="VEuPathDB" id="FungiDB:NCU10055"/>
<dbReference type="HOGENOM" id="CLU_054785_0_0_1"/>
<dbReference type="InParanoid" id="Q9UW81"/>
<dbReference type="OMA" id="ILWTAYP"/>
<dbReference type="OrthoDB" id="10261467at2759"/>
<dbReference type="Proteomes" id="UP000001805">
    <property type="component" value="Chromosome 7, Linkage Group VII"/>
</dbReference>
<dbReference type="GO" id="GO:0016020">
    <property type="term" value="C:membrane"/>
    <property type="evidence" value="ECO:0000303"/>
    <property type="project" value="UniProtKB"/>
</dbReference>
<dbReference type="GO" id="GO:0005886">
    <property type="term" value="C:plasma membrane"/>
    <property type="evidence" value="ECO:0000318"/>
    <property type="project" value="GO_Central"/>
</dbReference>
<dbReference type="GO" id="GO:0005503">
    <property type="term" value="F:all-trans retinal binding"/>
    <property type="evidence" value="ECO:0000314"/>
    <property type="project" value="UniProtKB"/>
</dbReference>
<dbReference type="GO" id="GO:0005216">
    <property type="term" value="F:monoatomic ion channel activity"/>
    <property type="evidence" value="ECO:0007669"/>
    <property type="project" value="InterPro"/>
</dbReference>
<dbReference type="GO" id="GO:0009881">
    <property type="term" value="F:photoreceptor activity"/>
    <property type="evidence" value="ECO:0007669"/>
    <property type="project" value="UniProtKB-KW"/>
</dbReference>
<dbReference type="GO" id="GO:0007602">
    <property type="term" value="P:phototransduction"/>
    <property type="evidence" value="ECO:0007669"/>
    <property type="project" value="UniProtKB-KW"/>
</dbReference>
<dbReference type="GO" id="GO:0009416">
    <property type="term" value="P:response to light stimulus"/>
    <property type="evidence" value="ECO:0000303"/>
    <property type="project" value="UniProtKB"/>
</dbReference>
<dbReference type="CDD" id="cd15028">
    <property type="entry name" value="7tm_Opsin-1_euk"/>
    <property type="match status" value="1"/>
</dbReference>
<dbReference type="FunFam" id="1.20.1070.10:FF:000160">
    <property type="entry name" value="Related to Opsin-1"/>
    <property type="match status" value="1"/>
</dbReference>
<dbReference type="Gene3D" id="1.20.1070.10">
    <property type="entry name" value="Rhodopsin 7-helix transmembrane proteins"/>
    <property type="match status" value="1"/>
</dbReference>
<dbReference type="InterPro" id="IPR001425">
    <property type="entry name" value="Arc/bac/fun_rhodopsins"/>
</dbReference>
<dbReference type="InterPro" id="IPR018229">
    <property type="entry name" value="Rhodopsin_retinal_BS"/>
</dbReference>
<dbReference type="PANTHER" id="PTHR28286">
    <property type="match status" value="1"/>
</dbReference>
<dbReference type="PANTHER" id="PTHR28286:SF2">
    <property type="entry name" value="BACTERIORHODOPSIN _OPSIN, NOPA (EUROFUNG)"/>
    <property type="match status" value="1"/>
</dbReference>
<dbReference type="Pfam" id="PF01036">
    <property type="entry name" value="Bac_rhodopsin"/>
    <property type="match status" value="1"/>
</dbReference>
<dbReference type="PRINTS" id="PR00251">
    <property type="entry name" value="BACTRLOPSIN"/>
</dbReference>
<dbReference type="SMART" id="SM01021">
    <property type="entry name" value="Bac_rhodopsin"/>
    <property type="match status" value="1"/>
</dbReference>
<dbReference type="SUPFAM" id="SSF81321">
    <property type="entry name" value="Family A G protein-coupled receptor-like"/>
    <property type="match status" value="1"/>
</dbReference>
<dbReference type="PROSITE" id="PS00950">
    <property type="entry name" value="BACTERIAL_OPSIN_1"/>
    <property type="match status" value="1"/>
</dbReference>
<dbReference type="PROSITE" id="PS00327">
    <property type="entry name" value="BACTERIAL_OPSIN_RET"/>
    <property type="match status" value="1"/>
</dbReference>
<gene>
    <name type="primary">nop-1</name>
    <name type="ORF">NCU10055</name>
</gene>
<comment type="function">
    <text evidence="6 7">Could facilitate a sensory photoresponse.</text>
</comment>
<comment type="subcellular location">
    <subcellularLocation>
        <location evidence="8">Membrane</location>
        <topology evidence="8">Multi-pass membrane protein</topology>
    </subcellularLocation>
</comment>
<comment type="developmental stage">
    <text evidence="3">Highest expression in sexually differentiated cultures and conidia when there has been exposure to light. Also expressed during vegetative growth.</text>
</comment>
<comment type="PTM">
    <text evidence="3 4">Binds all-trans retinal via a protonated Schiff base linkage.</text>
</comment>
<comment type="similarity">
    <text evidence="8">Belongs to the archaeal/bacterial/fungal opsin family.</text>
</comment>
<sequence length="304" mass="33487">MIHPEQVADMLRPTTSTTSSHVPGPVPTVVPTPTEYQTLGETGHRTLWVTFALMVLSSGIFALLSWNVPTSKRLFHVITTLITVVASLSYFAMATGHATTFNCDTAWDHHKHVPDTSHQVCRQVFWGRYVDWALTTPLLLLELCLLAGVDGAHTLMAIVADVIMVLCGLFAALGEGGNTAQKWGWYTIGCFSYLFVIWHVALHGSRTVTAKGRGVSRLFTGLAVFALLLWTAYPIIWGIAGGARRTNVDTEILIYTVLDLLAKPVFGFWLLLSHRAMPETNIDLPGYWSHGLATEGRIRIGEED</sequence>
<proteinExistence type="evidence at protein level"/>